<feature type="chain" id="PRO_0000088472" description="Putative zinc metalloprotease slr1821">
    <location>
        <begin position="1"/>
        <end position="366"/>
    </location>
</feature>
<feature type="transmembrane region" description="Helical" evidence="2">
    <location>
        <begin position="95"/>
        <end position="115"/>
    </location>
</feature>
<feature type="transmembrane region" description="Helical" evidence="2">
    <location>
        <begin position="293"/>
        <end position="313"/>
    </location>
</feature>
<feature type="transmembrane region" description="Helical" evidence="2">
    <location>
        <begin position="325"/>
        <end position="345"/>
    </location>
</feature>
<feature type="domain" description="PDZ">
    <location>
        <begin position="106"/>
        <end position="188"/>
    </location>
</feature>
<feature type="active site" evidence="2">
    <location>
        <position position="21"/>
    </location>
</feature>
<feature type="binding site" evidence="2">
    <location>
        <position position="20"/>
    </location>
    <ligand>
        <name>Zn(2+)</name>
        <dbReference type="ChEBI" id="CHEBI:29105"/>
        <note>catalytic</note>
    </ligand>
</feature>
<feature type="binding site" evidence="2">
    <location>
        <position position="24"/>
    </location>
    <ligand>
        <name>Zn(2+)</name>
        <dbReference type="ChEBI" id="CHEBI:29105"/>
        <note>catalytic</note>
    </ligand>
</feature>
<comment type="cofactor">
    <cofactor evidence="3">
        <name>Zn(2+)</name>
        <dbReference type="ChEBI" id="CHEBI:29105"/>
    </cofactor>
</comment>
<comment type="subcellular location">
    <subcellularLocation>
        <location evidence="1">Cell inner membrane</location>
        <topology evidence="1">Multi-pass membrane protein</topology>
    </subcellularLocation>
</comment>
<comment type="similarity">
    <text evidence="3">Belongs to the peptidase M50B family.</text>
</comment>
<protein>
    <recommendedName>
        <fullName>Putative zinc metalloprotease slr1821</fullName>
        <ecNumber>3.4.24.-</ecNumber>
    </recommendedName>
</protein>
<keyword id="KW-0997">Cell inner membrane</keyword>
<keyword id="KW-1003">Cell membrane</keyword>
<keyword id="KW-0378">Hydrolase</keyword>
<keyword id="KW-0472">Membrane</keyword>
<keyword id="KW-0479">Metal-binding</keyword>
<keyword id="KW-0482">Metalloprotease</keyword>
<keyword id="KW-0645">Protease</keyword>
<keyword id="KW-1185">Reference proteome</keyword>
<keyword id="KW-0812">Transmembrane</keyword>
<keyword id="KW-1133">Transmembrane helix</keyword>
<keyword id="KW-0862">Zinc</keyword>
<dbReference type="EC" id="3.4.24.-"/>
<dbReference type="EMBL" id="BA000022">
    <property type="protein sequence ID" value="BAA17761.1"/>
    <property type="molecule type" value="Genomic_DNA"/>
</dbReference>
<dbReference type="PIR" id="S77203">
    <property type="entry name" value="S77203"/>
</dbReference>
<dbReference type="SMR" id="P73714"/>
<dbReference type="FunCoup" id="P73714">
    <property type="interactions" value="452"/>
</dbReference>
<dbReference type="IntAct" id="P73714">
    <property type="interactions" value="4"/>
</dbReference>
<dbReference type="STRING" id="1148.gene:10498628"/>
<dbReference type="PaxDb" id="1148-1652842"/>
<dbReference type="EnsemblBacteria" id="BAA17761">
    <property type="protein sequence ID" value="BAA17761"/>
    <property type="gene ID" value="BAA17761"/>
</dbReference>
<dbReference type="KEGG" id="syn:slr1821"/>
<dbReference type="eggNOG" id="COG0750">
    <property type="taxonomic scope" value="Bacteria"/>
</dbReference>
<dbReference type="InParanoid" id="P73714"/>
<dbReference type="PhylomeDB" id="P73714"/>
<dbReference type="BRENDA" id="3.4.24.85">
    <property type="organism ID" value="6192"/>
</dbReference>
<dbReference type="Proteomes" id="UP000001425">
    <property type="component" value="Chromosome"/>
</dbReference>
<dbReference type="GO" id="GO:0005886">
    <property type="term" value="C:plasma membrane"/>
    <property type="evidence" value="ECO:0007669"/>
    <property type="project" value="UniProtKB-SubCell"/>
</dbReference>
<dbReference type="GO" id="GO:0046872">
    <property type="term" value="F:metal ion binding"/>
    <property type="evidence" value="ECO:0007669"/>
    <property type="project" value="UniProtKB-KW"/>
</dbReference>
<dbReference type="GO" id="GO:0004222">
    <property type="term" value="F:metalloendopeptidase activity"/>
    <property type="evidence" value="ECO:0007669"/>
    <property type="project" value="InterPro"/>
</dbReference>
<dbReference type="GO" id="GO:0006508">
    <property type="term" value="P:proteolysis"/>
    <property type="evidence" value="ECO:0007669"/>
    <property type="project" value="UniProtKB-KW"/>
</dbReference>
<dbReference type="CDD" id="cd06163">
    <property type="entry name" value="S2P-M50_PDZ_RseP-like"/>
    <property type="match status" value="1"/>
</dbReference>
<dbReference type="Gene3D" id="2.30.42.10">
    <property type="match status" value="1"/>
</dbReference>
<dbReference type="InterPro" id="IPR001478">
    <property type="entry name" value="PDZ"/>
</dbReference>
<dbReference type="InterPro" id="IPR036034">
    <property type="entry name" value="PDZ_sf"/>
</dbReference>
<dbReference type="InterPro" id="IPR004387">
    <property type="entry name" value="Pept_M50_Zn"/>
</dbReference>
<dbReference type="InterPro" id="IPR008915">
    <property type="entry name" value="Peptidase_M50"/>
</dbReference>
<dbReference type="NCBIfam" id="TIGR00054">
    <property type="entry name" value="RIP metalloprotease RseP"/>
    <property type="match status" value="2"/>
</dbReference>
<dbReference type="PANTHER" id="PTHR42837:SF2">
    <property type="entry name" value="MEMBRANE METALLOPROTEASE ARASP2, CHLOROPLASTIC-RELATED"/>
    <property type="match status" value="1"/>
</dbReference>
<dbReference type="PANTHER" id="PTHR42837">
    <property type="entry name" value="REGULATOR OF SIGMA-E PROTEASE RSEP"/>
    <property type="match status" value="1"/>
</dbReference>
<dbReference type="Pfam" id="PF13180">
    <property type="entry name" value="PDZ_2"/>
    <property type="match status" value="1"/>
</dbReference>
<dbReference type="Pfam" id="PF02163">
    <property type="entry name" value="Peptidase_M50"/>
    <property type="match status" value="1"/>
</dbReference>
<dbReference type="SMART" id="SM00228">
    <property type="entry name" value="PDZ"/>
    <property type="match status" value="1"/>
</dbReference>
<dbReference type="SUPFAM" id="SSF50156">
    <property type="entry name" value="PDZ domain-like"/>
    <property type="match status" value="1"/>
</dbReference>
<evidence type="ECO:0000250" key="1"/>
<evidence type="ECO:0000255" key="2"/>
<evidence type="ECO:0000305" key="3"/>
<accession>P73714</accession>
<organism>
    <name type="scientific">Synechocystis sp. (strain ATCC 27184 / PCC 6803 / Kazusa)</name>
    <dbReference type="NCBI Taxonomy" id="1111708"/>
    <lineage>
        <taxon>Bacteria</taxon>
        <taxon>Bacillati</taxon>
        <taxon>Cyanobacteriota</taxon>
        <taxon>Cyanophyceae</taxon>
        <taxon>Synechococcales</taxon>
        <taxon>Merismopediaceae</taxon>
        <taxon>Synechocystis</taxon>
    </lineage>
</organism>
<sequence>MSVLAALAAIGVLAVLIAVHELGHFAAARLQGIHVTRFALGFGPPLLKYQGAETEYSIRAIPLGGYVAFPDDDPDSEIPADDPNLLKNRPILDRAIVISAGVIANLVFAYFLLIGQVSTIGFQNIQPGLVIPQVDSASAAQVAGMEPGDIVLSLQGNTLPGFPDATTQFIDIVRRSPSVPITVEVQRGEETKTLTITPTPDAEGKGKIGVALLPNVETKRASNPLEALTYSAEAFERIVKLTTQGFWQLISNFADNASQVAGPVKIVEYGANIARSDASNLFQFGALISINLAVINILPLPALDGGQLVFLLIEGLLGKPLPEKFQMGVMQTGLVLLLSLGVFLIVRDTLNLTFVQEFLPSFTGYE</sequence>
<proteinExistence type="inferred from homology"/>
<reference key="1">
    <citation type="journal article" date="1996" name="DNA Res.">
        <title>Sequence analysis of the genome of the unicellular cyanobacterium Synechocystis sp. strain PCC6803. II. Sequence determination of the entire genome and assignment of potential protein-coding regions.</title>
        <authorList>
            <person name="Kaneko T."/>
            <person name="Sato S."/>
            <person name="Kotani H."/>
            <person name="Tanaka A."/>
            <person name="Asamizu E."/>
            <person name="Nakamura Y."/>
            <person name="Miyajima N."/>
            <person name="Hirosawa M."/>
            <person name="Sugiura M."/>
            <person name="Sasamoto S."/>
            <person name="Kimura T."/>
            <person name="Hosouchi T."/>
            <person name="Matsuno A."/>
            <person name="Muraki A."/>
            <person name="Nakazaki N."/>
            <person name="Naruo K."/>
            <person name="Okumura S."/>
            <person name="Shimpo S."/>
            <person name="Takeuchi C."/>
            <person name="Wada T."/>
            <person name="Watanabe A."/>
            <person name="Yamada M."/>
            <person name="Yasuda M."/>
            <person name="Tabata S."/>
        </authorList>
    </citation>
    <scope>NUCLEOTIDE SEQUENCE [LARGE SCALE GENOMIC DNA]</scope>
    <source>
        <strain>ATCC 27184 / PCC 6803 / Kazusa</strain>
    </source>
</reference>
<name>Y1821_SYNY3</name>
<gene>
    <name type="ordered locus">slr1821</name>
</gene>